<protein>
    <recommendedName>
        <fullName evidence="6">Putative mitochondrial transporter UCP3</fullName>
    </recommendedName>
    <alternativeName>
        <fullName>Solute carrier family 25 member 9</fullName>
    </alternativeName>
    <alternativeName>
        <fullName evidence="5">Uncoupling protein 3</fullName>
        <shortName>UCP 3</shortName>
    </alternativeName>
</protein>
<comment type="function">
    <text evidence="2">Putative transmembrane transporter that plays a role in mitochondrial metabolism via an as yet unclear mechanism. Originally, this mitochondrial protein was thought to act as a proton transmembrane transporter from the mitochondrial intermembrane space into the matrix, causing proton leaks through the inner mitochondrial membrane, thereby uncoupling mitochondrial membrane potential generation from ATP synthesis. However, this function is controversial and uncoupling may not be the function, or at least not the main function, but rather a consequence of more conventional metabolite transporter activity.</text>
</comment>
<comment type="subunit">
    <text evidence="2">Interacts with HAX1; the interaction is direct and calcium-dependent.</text>
</comment>
<comment type="subcellular location">
    <subcellularLocation>
        <location evidence="3">Mitochondrion inner membrane</location>
        <topology evidence="4">Multi-pass membrane protein</topology>
    </subcellularLocation>
</comment>
<comment type="similarity">
    <text evidence="6">Belongs to the mitochondrial carrier (TC 2.A.29) family.</text>
</comment>
<evidence type="ECO:0000250" key="1"/>
<evidence type="ECO:0000250" key="2">
    <source>
        <dbReference type="UniProtKB" id="P55916"/>
    </source>
</evidence>
<evidence type="ECO:0000250" key="3">
    <source>
        <dbReference type="UniProtKB" id="P56501"/>
    </source>
</evidence>
<evidence type="ECO:0000255" key="4"/>
<evidence type="ECO:0000303" key="5">
    <source ref="1"/>
</evidence>
<evidence type="ECO:0000305" key="6"/>
<reference key="1">
    <citation type="submission" date="1998-09" db="EMBL/GenBank/DDBJ databases">
        <title>Characterization of the porcine uncoupling proteins 2 and 3 (UCP2 and 3) and their localization to chromosome 9p by somatic cell hybrids.</title>
        <authorList>
            <person name="Werner P."/>
            <person name="Nowaczyk K."/>
            <person name="Neuenschwander S."/>
            <person name="Strazinger G."/>
        </authorList>
    </citation>
    <scope>NUCLEOTIDE SEQUENCE [MRNA]</scope>
    <source>
        <tissue>White adipose tissue</tissue>
    </source>
</reference>
<reference key="2">
    <citation type="submission" date="1999-02" db="EMBL/GenBank/DDBJ databases">
        <title>First evidence of uncoupling protein (UCP) gene expression in piglet skeletal muscle.</title>
        <authorList>
            <person name="Damon M."/>
            <person name="Vincent A."/>
            <person name="Herpin P."/>
        </authorList>
    </citation>
    <scope>NUCLEOTIDE SEQUENCE [MRNA]</scope>
    <source>
        <strain>Large white X Pietrain</strain>
        <tissue>Skeletal muscle</tissue>
    </source>
</reference>
<reference key="3">
    <citation type="submission" date="2006-05" db="EMBL/GenBank/DDBJ databases">
        <title>Cloning pig uncoupling protein 2 and 3 genes.</title>
        <authorList>
            <person name="Zhao X.B."/>
            <person name="Li H.J."/>
        </authorList>
    </citation>
    <scope>NUCLEOTIDE SEQUENCE [MRNA]</scope>
</reference>
<proteinExistence type="evidence at transcript level"/>
<organism>
    <name type="scientific">Sus scrofa</name>
    <name type="common">Pig</name>
    <dbReference type="NCBI Taxonomy" id="9823"/>
    <lineage>
        <taxon>Eukaryota</taxon>
        <taxon>Metazoa</taxon>
        <taxon>Chordata</taxon>
        <taxon>Craniata</taxon>
        <taxon>Vertebrata</taxon>
        <taxon>Euteleostomi</taxon>
        <taxon>Mammalia</taxon>
        <taxon>Eutheria</taxon>
        <taxon>Laurasiatheria</taxon>
        <taxon>Artiodactyla</taxon>
        <taxon>Suina</taxon>
        <taxon>Suidae</taxon>
        <taxon>Sus</taxon>
    </lineage>
</organism>
<gene>
    <name evidence="5" type="primary">UCP3</name>
    <name type="synonym">SLC25A9</name>
</gene>
<keyword id="KW-0472">Membrane</keyword>
<keyword id="KW-0496">Mitochondrion</keyword>
<keyword id="KW-0999">Mitochondrion inner membrane</keyword>
<keyword id="KW-1185">Reference proteome</keyword>
<keyword id="KW-0677">Repeat</keyword>
<keyword id="KW-0812">Transmembrane</keyword>
<keyword id="KW-1133">Transmembrane helix</keyword>
<keyword id="KW-0813">Transport</keyword>
<feature type="chain" id="PRO_0000090674" description="Putative mitochondrial transporter UCP3">
    <location>
        <begin position="1"/>
        <end position="308"/>
    </location>
</feature>
<feature type="topological domain" description="Mitochondrial intermembrane" evidence="3">
    <location>
        <begin position="1"/>
        <end position="10"/>
    </location>
</feature>
<feature type="transmembrane region" description="Helical; Name=1" evidence="4">
    <location>
        <begin position="11"/>
        <end position="32"/>
    </location>
</feature>
<feature type="topological domain" description="Mitochondrial matrix" evidence="3">
    <location>
        <begin position="33"/>
        <end position="73"/>
    </location>
</feature>
<feature type="transmembrane region" description="Helical; Name=2" evidence="4">
    <location>
        <begin position="74"/>
        <end position="96"/>
    </location>
</feature>
<feature type="topological domain" description="Mitochondrial intermembrane" evidence="3">
    <location>
        <begin position="97"/>
        <end position="116"/>
    </location>
</feature>
<feature type="transmembrane region" description="Helical; Name=3" evidence="4">
    <location>
        <begin position="117"/>
        <end position="133"/>
    </location>
</feature>
<feature type="topological domain" description="Mitochondrial matrix" evidence="3">
    <location>
        <begin position="134"/>
        <end position="179"/>
    </location>
</feature>
<feature type="transmembrane region" description="Helical; Name=4" evidence="4">
    <location>
        <begin position="180"/>
        <end position="196"/>
    </location>
</feature>
<feature type="topological domain" description="Mitochondrial intermembrane" evidence="3">
    <location>
        <begin position="197"/>
        <end position="213"/>
    </location>
</feature>
<feature type="transmembrane region" description="Helical; Name=5" evidence="4">
    <location>
        <begin position="214"/>
        <end position="233"/>
    </location>
</feature>
<feature type="topological domain" description="Mitochondrial matrix" evidence="3">
    <location>
        <begin position="234"/>
        <end position="267"/>
    </location>
</feature>
<feature type="transmembrane region" description="Helical; Name=6" evidence="4">
    <location>
        <begin position="268"/>
        <end position="290"/>
    </location>
</feature>
<feature type="topological domain" description="Mitochondrial intermembrane" evidence="3">
    <location>
        <begin position="291"/>
        <end position="308"/>
    </location>
</feature>
<feature type="repeat" description="Solcar 1">
    <location>
        <begin position="11"/>
        <end position="102"/>
    </location>
</feature>
<feature type="repeat" description="Solcar 2">
    <location>
        <begin position="111"/>
        <end position="202"/>
    </location>
</feature>
<feature type="repeat" description="Solcar 3">
    <location>
        <begin position="211"/>
        <end position="296"/>
    </location>
</feature>
<feature type="region of interest" description="Purine nucleotide binding" evidence="1">
    <location>
        <begin position="275"/>
        <end position="297"/>
    </location>
</feature>
<feature type="sequence conflict" description="In Ref. 2; AAD33396." evidence="6" ref="2">
    <original>PE</original>
    <variation>SD</variation>
    <location>
        <begin position="7"/>
        <end position="8"/>
    </location>
</feature>
<feature type="sequence conflict" description="In Ref. 2; AAD33396." evidence="6" ref="2">
    <original>T</original>
    <variation>M</variation>
    <location>
        <position position="13"/>
    </location>
</feature>
<feature type="sequence conflict" description="In Ref. 2; AAD33396." evidence="6" ref="2">
    <original>L</original>
    <variation>F</variation>
    <location>
        <position position="17"/>
    </location>
</feature>
<feature type="sequence conflict" description="In Ref. 2; AAD33396." evidence="6" ref="2">
    <original>A</original>
    <variation>AVQT</variation>
    <location>
        <position position="49"/>
    </location>
</feature>
<feature type="sequence conflict" description="In Ref. 2; AAD33396." evidence="6" ref="2">
    <original>R</original>
    <variation>G</variation>
    <location>
        <position position="150"/>
    </location>
</feature>
<sequence length="308" mass="33772">MVGLKPPEVPPTTAVKLLGAGTAACFADLLTFPLDTAKVRLQIQGENQAARSAQYRGVLGTILTMVRNEGPRSPYNGLVAGLQRQMSFASIRIGLYDSVKQLYTPKGSDHSSITTRILAGCTTGAMAVTCAQPTDVVKVRFQASIHAGPRSNRKYSGTMDAYRTIAREEGVRGLWKGILPNITRNAIVNCAEMVTYDVIKEKVLDYHLLTDNLPCHFVSAFGAGFCATVVASPVDVVKTRYMNSPPGQYQNPLDCMLKMVTQEGPTAFYKGFTPSFLRLGSWNVVMFVSYEQLKRALMKVQMLRESPF</sequence>
<name>UCP3_PIG</name>
<accession>O97649</accession>
<accession>Q19B00</accession>
<accession>Q9XSE6</accession>
<dbReference type="EMBL" id="AF095744">
    <property type="protein sequence ID" value="AAD08811.1"/>
    <property type="molecule type" value="mRNA"/>
</dbReference>
<dbReference type="EMBL" id="AF128837">
    <property type="protein sequence ID" value="AAD33396.1"/>
    <property type="molecule type" value="mRNA"/>
</dbReference>
<dbReference type="EMBL" id="DQ530368">
    <property type="protein sequence ID" value="ABF74760.1"/>
    <property type="molecule type" value="mRNA"/>
</dbReference>
<dbReference type="RefSeq" id="NP_999214.1">
    <property type="nucleotide sequence ID" value="NM_214049.1"/>
</dbReference>
<dbReference type="SMR" id="O97649"/>
<dbReference type="FunCoup" id="O97649">
    <property type="interactions" value="136"/>
</dbReference>
<dbReference type="STRING" id="9823.ENSSSCP00000049969"/>
<dbReference type="GlyGen" id="O97649">
    <property type="glycosylation" value="1 site"/>
</dbReference>
<dbReference type="PaxDb" id="9823-ENSSSCP00000015753"/>
<dbReference type="Ensembl" id="ENSSSCT00105017998">
    <property type="protein sequence ID" value="ENSSSCP00105012756"/>
    <property type="gene ID" value="ENSSSCG00105009109"/>
</dbReference>
<dbReference type="GeneID" id="397116"/>
<dbReference type="KEGG" id="ssc:397116"/>
<dbReference type="CTD" id="7352"/>
<dbReference type="eggNOG" id="KOG0753">
    <property type="taxonomic scope" value="Eukaryota"/>
</dbReference>
<dbReference type="InParanoid" id="O97649"/>
<dbReference type="OrthoDB" id="448427at2759"/>
<dbReference type="Proteomes" id="UP000008227">
    <property type="component" value="Unplaced"/>
</dbReference>
<dbReference type="Proteomes" id="UP000314985">
    <property type="component" value="Unplaced"/>
</dbReference>
<dbReference type="Proteomes" id="UP000694570">
    <property type="component" value="Unplaced"/>
</dbReference>
<dbReference type="Proteomes" id="UP000694571">
    <property type="component" value="Unplaced"/>
</dbReference>
<dbReference type="Proteomes" id="UP000694720">
    <property type="component" value="Unplaced"/>
</dbReference>
<dbReference type="Proteomes" id="UP000694722">
    <property type="component" value="Unplaced"/>
</dbReference>
<dbReference type="Proteomes" id="UP000694723">
    <property type="component" value="Unplaced"/>
</dbReference>
<dbReference type="Proteomes" id="UP000694724">
    <property type="component" value="Unplaced"/>
</dbReference>
<dbReference type="Proteomes" id="UP000694725">
    <property type="component" value="Unplaced"/>
</dbReference>
<dbReference type="Proteomes" id="UP000694726">
    <property type="component" value="Unplaced"/>
</dbReference>
<dbReference type="Proteomes" id="UP000694727">
    <property type="component" value="Unplaced"/>
</dbReference>
<dbReference type="Proteomes" id="UP000694728">
    <property type="component" value="Unplaced"/>
</dbReference>
<dbReference type="GO" id="GO:0005743">
    <property type="term" value="C:mitochondrial inner membrane"/>
    <property type="evidence" value="ECO:0000250"/>
    <property type="project" value="UniProtKB"/>
</dbReference>
<dbReference type="GO" id="GO:0017077">
    <property type="term" value="F:oxidative phosphorylation uncoupler activity"/>
    <property type="evidence" value="ECO:0000318"/>
    <property type="project" value="GO_Central"/>
</dbReference>
<dbReference type="GO" id="GO:1990845">
    <property type="term" value="P:adaptive thermogenesis"/>
    <property type="evidence" value="ECO:0000318"/>
    <property type="project" value="GO_Central"/>
</dbReference>
<dbReference type="GO" id="GO:1990542">
    <property type="term" value="P:mitochondrial transmembrane transport"/>
    <property type="evidence" value="ECO:0000318"/>
    <property type="project" value="GO_Central"/>
</dbReference>
<dbReference type="GO" id="GO:0009409">
    <property type="term" value="P:response to cold"/>
    <property type="evidence" value="ECO:0000318"/>
    <property type="project" value="GO_Central"/>
</dbReference>
<dbReference type="FunFam" id="1.50.40.10:FF:000008">
    <property type="entry name" value="Mitochondrial uncoupling protein 2"/>
    <property type="match status" value="1"/>
</dbReference>
<dbReference type="Gene3D" id="1.50.40.10">
    <property type="entry name" value="Mitochondrial carrier domain"/>
    <property type="match status" value="1"/>
</dbReference>
<dbReference type="InterPro" id="IPR002067">
    <property type="entry name" value="Mit_carrier"/>
</dbReference>
<dbReference type="InterPro" id="IPR050391">
    <property type="entry name" value="Mito_Metabolite_Transporter"/>
</dbReference>
<dbReference type="InterPro" id="IPR018108">
    <property type="entry name" value="Mitochondrial_sb/sol_carrier"/>
</dbReference>
<dbReference type="InterPro" id="IPR023395">
    <property type="entry name" value="Mt_carrier_dom_sf"/>
</dbReference>
<dbReference type="PANTHER" id="PTHR45618">
    <property type="entry name" value="MITOCHONDRIAL DICARBOXYLATE CARRIER-RELATED"/>
    <property type="match status" value="1"/>
</dbReference>
<dbReference type="Pfam" id="PF00153">
    <property type="entry name" value="Mito_carr"/>
    <property type="match status" value="3"/>
</dbReference>
<dbReference type="PRINTS" id="PR00784">
    <property type="entry name" value="MTUNCOUPLING"/>
</dbReference>
<dbReference type="SUPFAM" id="SSF103506">
    <property type="entry name" value="Mitochondrial carrier"/>
    <property type="match status" value="1"/>
</dbReference>
<dbReference type="PROSITE" id="PS50920">
    <property type="entry name" value="SOLCAR"/>
    <property type="match status" value="3"/>
</dbReference>